<sequence length="238" mass="26635">MQLAVNIDHIATLRNARNEQQPDPVTAAAIAELSGASGIVCHLREDRRHIKDRDLERLRESVTTKLDLEMAMTEEMQRIAIRTKPELITLVPEKREELTTEGGFDIISHYDRLAEFIKPVRDAGIEVSLFIEPEEKAVALAAKAGADIVEMHTGPYSLKKRPEDIDAEIKRIRIAASYARDSGLRVVAGHGLNYYNILPFRRIEEIEEVSIGHALIARAALAGMETAVRDMLHLINEA</sequence>
<dbReference type="EC" id="2.6.99.2" evidence="1"/>
<dbReference type="EMBL" id="CP001101">
    <property type="protein sequence ID" value="ACE04784.1"/>
    <property type="molecule type" value="Genomic_DNA"/>
</dbReference>
<dbReference type="SMR" id="B3ELU3"/>
<dbReference type="STRING" id="331678.Cphamn1_1867"/>
<dbReference type="KEGG" id="cpb:Cphamn1_1867"/>
<dbReference type="eggNOG" id="COG0854">
    <property type="taxonomic scope" value="Bacteria"/>
</dbReference>
<dbReference type="HOGENOM" id="CLU_074563_0_0_10"/>
<dbReference type="OrthoDB" id="9806590at2"/>
<dbReference type="UniPathway" id="UPA00244">
    <property type="reaction ID" value="UER00313"/>
</dbReference>
<dbReference type="GO" id="GO:0005829">
    <property type="term" value="C:cytosol"/>
    <property type="evidence" value="ECO:0007669"/>
    <property type="project" value="TreeGrafter"/>
</dbReference>
<dbReference type="GO" id="GO:0033856">
    <property type="term" value="F:pyridoxine 5'-phosphate synthase activity"/>
    <property type="evidence" value="ECO:0007669"/>
    <property type="project" value="UniProtKB-EC"/>
</dbReference>
<dbReference type="GO" id="GO:0008615">
    <property type="term" value="P:pyridoxine biosynthetic process"/>
    <property type="evidence" value="ECO:0007669"/>
    <property type="project" value="UniProtKB-UniRule"/>
</dbReference>
<dbReference type="CDD" id="cd00003">
    <property type="entry name" value="PNPsynthase"/>
    <property type="match status" value="1"/>
</dbReference>
<dbReference type="Gene3D" id="3.20.20.70">
    <property type="entry name" value="Aldolase class I"/>
    <property type="match status" value="1"/>
</dbReference>
<dbReference type="HAMAP" id="MF_00279">
    <property type="entry name" value="PdxJ"/>
    <property type="match status" value="1"/>
</dbReference>
<dbReference type="InterPro" id="IPR013785">
    <property type="entry name" value="Aldolase_TIM"/>
</dbReference>
<dbReference type="InterPro" id="IPR004569">
    <property type="entry name" value="PyrdxlP_synth_PdxJ"/>
</dbReference>
<dbReference type="InterPro" id="IPR036130">
    <property type="entry name" value="Pyridoxine-5'_phos_synth"/>
</dbReference>
<dbReference type="NCBIfam" id="TIGR00559">
    <property type="entry name" value="pdxJ"/>
    <property type="match status" value="1"/>
</dbReference>
<dbReference type="NCBIfam" id="NF003625">
    <property type="entry name" value="PRK05265.1-3"/>
    <property type="match status" value="1"/>
</dbReference>
<dbReference type="NCBIfam" id="NF003627">
    <property type="entry name" value="PRK05265.1-5"/>
    <property type="match status" value="1"/>
</dbReference>
<dbReference type="PANTHER" id="PTHR30456">
    <property type="entry name" value="PYRIDOXINE 5'-PHOSPHATE SYNTHASE"/>
    <property type="match status" value="1"/>
</dbReference>
<dbReference type="PANTHER" id="PTHR30456:SF0">
    <property type="entry name" value="PYRIDOXINE 5'-PHOSPHATE SYNTHASE"/>
    <property type="match status" value="1"/>
</dbReference>
<dbReference type="Pfam" id="PF03740">
    <property type="entry name" value="PdxJ"/>
    <property type="match status" value="1"/>
</dbReference>
<dbReference type="SUPFAM" id="SSF63892">
    <property type="entry name" value="Pyridoxine 5'-phosphate synthase"/>
    <property type="match status" value="1"/>
</dbReference>
<evidence type="ECO:0000255" key="1">
    <source>
        <dbReference type="HAMAP-Rule" id="MF_00279"/>
    </source>
</evidence>
<accession>B3ELU3</accession>
<feature type="chain" id="PRO_1000114803" description="Pyridoxine 5'-phosphate synthase">
    <location>
        <begin position="1"/>
        <end position="238"/>
    </location>
</feature>
<feature type="active site" description="Proton acceptor" evidence="1">
    <location>
        <position position="42"/>
    </location>
</feature>
<feature type="active site" description="Proton acceptor" evidence="1">
    <location>
        <position position="69"/>
    </location>
</feature>
<feature type="active site" description="Proton donor" evidence="1">
    <location>
        <position position="190"/>
    </location>
</feature>
<feature type="binding site" evidence="1">
    <location>
        <position position="6"/>
    </location>
    <ligand>
        <name>3-amino-2-oxopropyl phosphate</name>
        <dbReference type="ChEBI" id="CHEBI:57279"/>
    </ligand>
</feature>
<feature type="binding site" evidence="1">
    <location>
        <begin position="8"/>
        <end position="9"/>
    </location>
    <ligand>
        <name>1-deoxy-D-xylulose 5-phosphate</name>
        <dbReference type="ChEBI" id="CHEBI:57792"/>
    </ligand>
</feature>
<feature type="binding site" evidence="1">
    <location>
        <position position="17"/>
    </location>
    <ligand>
        <name>3-amino-2-oxopropyl phosphate</name>
        <dbReference type="ChEBI" id="CHEBI:57279"/>
    </ligand>
</feature>
<feature type="binding site" evidence="1">
    <location>
        <position position="44"/>
    </location>
    <ligand>
        <name>1-deoxy-D-xylulose 5-phosphate</name>
        <dbReference type="ChEBI" id="CHEBI:57792"/>
    </ligand>
</feature>
<feature type="binding site" evidence="1">
    <location>
        <position position="49"/>
    </location>
    <ligand>
        <name>1-deoxy-D-xylulose 5-phosphate</name>
        <dbReference type="ChEBI" id="CHEBI:57792"/>
    </ligand>
</feature>
<feature type="binding site" evidence="1">
    <location>
        <position position="99"/>
    </location>
    <ligand>
        <name>1-deoxy-D-xylulose 5-phosphate</name>
        <dbReference type="ChEBI" id="CHEBI:57792"/>
    </ligand>
</feature>
<feature type="binding site" evidence="1">
    <location>
        <position position="191"/>
    </location>
    <ligand>
        <name>3-amino-2-oxopropyl phosphate</name>
        <dbReference type="ChEBI" id="CHEBI:57279"/>
    </ligand>
</feature>
<feature type="binding site" evidence="1">
    <location>
        <begin position="212"/>
        <end position="213"/>
    </location>
    <ligand>
        <name>3-amino-2-oxopropyl phosphate</name>
        <dbReference type="ChEBI" id="CHEBI:57279"/>
    </ligand>
</feature>
<feature type="site" description="Transition state stabilizer" evidence="1">
    <location>
        <position position="150"/>
    </location>
</feature>
<organism>
    <name type="scientific">Chlorobium phaeobacteroides (strain BS1)</name>
    <dbReference type="NCBI Taxonomy" id="331678"/>
    <lineage>
        <taxon>Bacteria</taxon>
        <taxon>Pseudomonadati</taxon>
        <taxon>Chlorobiota</taxon>
        <taxon>Chlorobiia</taxon>
        <taxon>Chlorobiales</taxon>
        <taxon>Chlorobiaceae</taxon>
        <taxon>Chlorobium/Pelodictyon group</taxon>
        <taxon>Chlorobium</taxon>
    </lineage>
</organism>
<gene>
    <name evidence="1" type="primary">pdxJ</name>
    <name type="ordered locus">Cphamn1_1867</name>
</gene>
<reference key="1">
    <citation type="submission" date="2008-06" db="EMBL/GenBank/DDBJ databases">
        <title>Complete sequence of Chlorobium phaeobacteroides BS1.</title>
        <authorList>
            <consortium name="US DOE Joint Genome Institute"/>
            <person name="Lucas S."/>
            <person name="Copeland A."/>
            <person name="Lapidus A."/>
            <person name="Glavina del Rio T."/>
            <person name="Dalin E."/>
            <person name="Tice H."/>
            <person name="Bruce D."/>
            <person name="Goodwin L."/>
            <person name="Pitluck S."/>
            <person name="Schmutz J."/>
            <person name="Larimer F."/>
            <person name="Land M."/>
            <person name="Hauser L."/>
            <person name="Kyrpides N."/>
            <person name="Ovchinnikova G."/>
            <person name="Li T."/>
            <person name="Liu Z."/>
            <person name="Zhao F."/>
            <person name="Overmann J."/>
            <person name="Bryant D.A."/>
            <person name="Richardson P."/>
        </authorList>
    </citation>
    <scope>NUCLEOTIDE SEQUENCE [LARGE SCALE GENOMIC DNA]</scope>
    <source>
        <strain>BS1</strain>
    </source>
</reference>
<proteinExistence type="inferred from homology"/>
<comment type="function">
    <text evidence="1">Catalyzes the complicated ring closure reaction between the two acyclic compounds 1-deoxy-D-xylulose-5-phosphate (DXP) and 3-amino-2-oxopropyl phosphate (1-amino-acetone-3-phosphate or AAP) to form pyridoxine 5'-phosphate (PNP) and inorganic phosphate.</text>
</comment>
<comment type="catalytic activity">
    <reaction evidence="1">
        <text>3-amino-2-oxopropyl phosphate + 1-deoxy-D-xylulose 5-phosphate = pyridoxine 5'-phosphate + phosphate + 2 H2O + H(+)</text>
        <dbReference type="Rhea" id="RHEA:15265"/>
        <dbReference type="ChEBI" id="CHEBI:15377"/>
        <dbReference type="ChEBI" id="CHEBI:15378"/>
        <dbReference type="ChEBI" id="CHEBI:43474"/>
        <dbReference type="ChEBI" id="CHEBI:57279"/>
        <dbReference type="ChEBI" id="CHEBI:57792"/>
        <dbReference type="ChEBI" id="CHEBI:58589"/>
        <dbReference type="EC" id="2.6.99.2"/>
    </reaction>
</comment>
<comment type="pathway">
    <text evidence="1">Cofactor biosynthesis; pyridoxine 5'-phosphate biosynthesis; pyridoxine 5'-phosphate from D-erythrose 4-phosphate: step 5/5.</text>
</comment>
<comment type="subunit">
    <text evidence="1">Homooctamer; tetramer of dimers.</text>
</comment>
<comment type="subcellular location">
    <subcellularLocation>
        <location evidence="1">Cytoplasm</location>
    </subcellularLocation>
</comment>
<comment type="similarity">
    <text evidence="1">Belongs to the PNP synthase family.</text>
</comment>
<name>PDXJ_CHLPB</name>
<keyword id="KW-0963">Cytoplasm</keyword>
<keyword id="KW-0664">Pyridoxine biosynthesis</keyword>
<keyword id="KW-0808">Transferase</keyword>
<protein>
    <recommendedName>
        <fullName evidence="1">Pyridoxine 5'-phosphate synthase</fullName>
        <shortName evidence="1">PNP synthase</shortName>
        <ecNumber evidence="1">2.6.99.2</ecNumber>
    </recommendedName>
</protein>